<keyword id="KW-0511">Multifunctional enzyme</keyword>
<keyword id="KW-0596">Phosphopantetheine</keyword>
<keyword id="KW-0597">Phosphoprotein</keyword>
<keyword id="KW-1185">Reference proteome</keyword>
<keyword id="KW-0677">Repeat</keyword>
<keyword id="KW-0808">Transferase</keyword>
<accession>A0A1L9UCG2</accession>
<gene>
    <name evidence="11" type="primary">albA</name>
    <name type="ORF">ASPBRDRAFT_131114</name>
</gene>
<sequence length="2147" mass="233620">MEGPSRVYLFGDQTSDIEAGLRRLLQAKNSTIVQSFFQQCFHAIRQEIAKLPPSQRKLFPRFTSIVDLLSKSRESGPSPVLESALTCIYQLGCFIHYYGDLGHGYPTPSNSHLVGLCLGVLSCTAVSCAKNVGELIPAAVEAVVVALRLGICVFRVRELVDSGDSESTCWSALISGISETEASRLIDEYSNKKATPPSSKPYISAVSSNGVTVSAPPTVLDEFIGTCISKNYKPVKAPIHGPYHAPHLYDNKDIERILQQSSALESLTASSPTVPVISSNTGKPINAKSTRDLFKVALEEILLRRLCWDKVTESCTSVCKTGTNHSCKLFPISSSATQSLFTALKKAGVNISLETGVGEIATNPDMRNLTGKAECSKIAIIGMSGRFPDADGTESFWDLLYKGLDVHRKVPADRWDVDAHVDLTGSKRNTSKVPYGCWINEPGLFDPRFFNMSPREALQADPAQRLALLTAYEALEMAGFIPDSSPSTQRDRVGIFYGMTSDDYREINSGQDIDTYFIPGGNRAFTPGRINYYFKFSGPSVSVDTACSSSLAAIHMACNSIWRNDCDAAITGGVNILTNPDNHAGLDRGHFLSTTGNCNTFDDGADGYCRADGVGSIVLKRLEDAEADNDPILAVINGAYTNHSAEAVSITRPHVGAQAFIFNKLLNDANIDPKEVSYVEMHGTGTQAGDAVEMQSVLDVFAPDYRRGPGQSLHIGSAKANIGHGESASGVTALVKVLLMMRENMIPPHCGIKTKINHNFPTDLAKRNVHIAFQPTPWNRPASGKRRSFVNNFSAAGGNTAILLEDAPIPERQGQDPRAFHLVSVSARSQSALKNNIESLVKYIDSQGKSFGVKETEFLPNLAYTTTARRIHHPFRVTAVGANLQSLRDSLHGALHRETYTPVPSTAPGIGFVFTGQGAQYTGMGKELYSTCFQFRTTIEHFDCIARSQGLPSILPLVDGSVPVEDLSPVVVQVGTTCVQMALVNYWTALGVKPAFIIGHSLGDYAALNTAGVLSTSDTIYLCGRRAQLLTKECKIGTHSMLAIKASLAEVKQFLKDELHEVSCVNAPAETVVSGLVADIDDLAQKCSTEGLKSTKLRVPYAFHSSQVDPILDTFEEIAQGVTFHKPTTPFVSALFGEVITDANWECLGPKYLRDHCRKTVNFLGGVEATRHAKLTNDKTLWVEIGSHTICSGMIKATLGPQVTTVASLRREEDTWKVLSNSLSSLHLAGIDINWKQYHQDFSSSHQVLRLPSYKWDLKNYWIPYTNNFCLHKGAPVAAVAAGPQHEFLTTAAQKVIETRSDGATATVVVENDIADPDLNRVIQGHKVNGAALCPSSLYADISQTLAEYLIKKYKPEYDGLGLDVCEVTVPRPLIAKSGQQLFRVSATADWAEKKVTLQVYSVTAEGKKTADHATCTVRFFDCAAAEAEWKRVSYLVKRSIDRLHDIAENGDAHRLGRGMVYKLFAALVDYDDNFKSIREVILDSEQHEATARVKFQAPQGNFHRNPFWIDSFGHLSGFIMNASDATDSKNQVFVNHGWDSMRCLKKFSPDVTYRTYVRMQPWKDSIWAGDVYVFDGDDIVAVYGAVKFQGLSRKILDTVLPPVGASKGPARPAASAQKAAPAATSKSRASAPAPAKAVAKPSAPSLVKRALTILAEEVGLSESELTDELVFADYGVDSLLSLTVTGRYREELDIDLESSVFIDQPTVKDFKQFLAPMSQGEASDGSTSDPESSSSFNGGSSTDESSAGSPVSSPPNEKIEQHATMKEIRAILADEIGVSEEELKDDENLGEMGMDSLLSLTVLGRIRETLDLDLPGEFFIENQTLNDVEDALGLKPKVAPAPAPTPAPAPVSAPILSEPVPNPKSTIMTRASPHPRSTSILLQGNPKTATKTLFLFPDGSGSATSYATIPGVSPDVCVYGLNCPYMKTPEKLKYPLAEMTFPYLAEIRRRQPKGPYNFGGWSAGGICAYDAARYLILEEGERVDRLLLLDSPFPIGLEKLPTRLYGFINSKGLFGEGNKAPPSWLLPHFLAFIDSLDTYRAVPLPFDDPKWANKMPKTFLVWAKDGICNKPDDPWPEPDPDGKPDTREMVWLLKNRTDMGPNKWDTLVGPANVGGISVIEGANHFTMTLGPKAKELGSFIGNAMAN</sequence>
<proteinExistence type="inferred from homology"/>
<name>ALBA_ASPBC</name>
<dbReference type="EC" id="2.3.1.-" evidence="12"/>
<dbReference type="EMBL" id="KV878688">
    <property type="protein sequence ID" value="OJJ69377.1"/>
    <property type="molecule type" value="Genomic_DNA"/>
</dbReference>
<dbReference type="SMR" id="A0A1L9UCG2"/>
<dbReference type="STRING" id="767769.A0A1L9UCG2"/>
<dbReference type="ESTHER" id="aspbc-alba">
    <property type="family name" value="Thioesterase"/>
</dbReference>
<dbReference type="VEuPathDB" id="FungiDB:ASPBRDRAFT_131114"/>
<dbReference type="OMA" id="WKDSIWA"/>
<dbReference type="OrthoDB" id="329835at2759"/>
<dbReference type="Proteomes" id="UP000184499">
    <property type="component" value="Unassembled WGS sequence"/>
</dbReference>
<dbReference type="GO" id="GO:0004315">
    <property type="term" value="F:3-oxoacyl-[acyl-carrier-protein] synthase activity"/>
    <property type="evidence" value="ECO:0007669"/>
    <property type="project" value="InterPro"/>
</dbReference>
<dbReference type="GO" id="GO:0004312">
    <property type="term" value="F:fatty acid synthase activity"/>
    <property type="evidence" value="ECO:0007669"/>
    <property type="project" value="TreeGrafter"/>
</dbReference>
<dbReference type="GO" id="GO:0031177">
    <property type="term" value="F:phosphopantetheine binding"/>
    <property type="evidence" value="ECO:0007669"/>
    <property type="project" value="InterPro"/>
</dbReference>
<dbReference type="GO" id="GO:0006633">
    <property type="term" value="P:fatty acid biosynthetic process"/>
    <property type="evidence" value="ECO:0007669"/>
    <property type="project" value="InterPro"/>
</dbReference>
<dbReference type="CDD" id="cd00833">
    <property type="entry name" value="PKS"/>
    <property type="match status" value="1"/>
</dbReference>
<dbReference type="FunFam" id="3.40.366.10:FF:000011">
    <property type="entry name" value="Polyketide synthetase PksP"/>
    <property type="match status" value="1"/>
</dbReference>
<dbReference type="FunFam" id="3.40.366.10:FF:000002">
    <property type="entry name" value="Probable polyketide synthase 2"/>
    <property type="match status" value="1"/>
</dbReference>
<dbReference type="FunFam" id="1.10.1200.10:FF:000011">
    <property type="entry name" value="Sterigmatocystin biosynthesis polyketide synthase"/>
    <property type="match status" value="2"/>
</dbReference>
<dbReference type="FunFam" id="3.10.129.110:FF:000001">
    <property type="entry name" value="Sterigmatocystin biosynthesis polyketide synthase"/>
    <property type="match status" value="1"/>
</dbReference>
<dbReference type="FunFam" id="3.40.47.10:FF:000031">
    <property type="entry name" value="Sterigmatocystin biosynthesis polyketide synthase"/>
    <property type="match status" value="1"/>
</dbReference>
<dbReference type="FunFam" id="3.40.50.1820:FF:000116">
    <property type="entry name" value="Sterigmatocystin biosynthesis polyketide synthase"/>
    <property type="match status" value="1"/>
</dbReference>
<dbReference type="Gene3D" id="3.30.70.3290">
    <property type="match status" value="1"/>
</dbReference>
<dbReference type="Gene3D" id="3.40.47.10">
    <property type="match status" value="1"/>
</dbReference>
<dbReference type="Gene3D" id="1.10.1200.10">
    <property type="entry name" value="ACP-like"/>
    <property type="match status" value="2"/>
</dbReference>
<dbReference type="Gene3D" id="3.40.50.1820">
    <property type="entry name" value="alpha/beta hydrolase"/>
    <property type="match status" value="1"/>
</dbReference>
<dbReference type="Gene3D" id="3.40.366.10">
    <property type="entry name" value="Malonyl-Coenzyme A Acyl Carrier Protein, domain 2"/>
    <property type="match status" value="3"/>
</dbReference>
<dbReference type="Gene3D" id="3.10.129.110">
    <property type="entry name" value="Polyketide synthase dehydratase"/>
    <property type="match status" value="1"/>
</dbReference>
<dbReference type="InterPro" id="IPR029058">
    <property type="entry name" value="AB_hydrolase_fold"/>
</dbReference>
<dbReference type="InterPro" id="IPR001227">
    <property type="entry name" value="Ac_transferase_dom_sf"/>
</dbReference>
<dbReference type="InterPro" id="IPR036736">
    <property type="entry name" value="ACP-like_sf"/>
</dbReference>
<dbReference type="InterPro" id="IPR014043">
    <property type="entry name" value="Acyl_transferase_dom"/>
</dbReference>
<dbReference type="InterPro" id="IPR016035">
    <property type="entry name" value="Acyl_Trfase/lysoPLipase"/>
</dbReference>
<dbReference type="InterPro" id="IPR018201">
    <property type="entry name" value="Ketoacyl_synth_AS"/>
</dbReference>
<dbReference type="InterPro" id="IPR014031">
    <property type="entry name" value="Ketoacyl_synth_C"/>
</dbReference>
<dbReference type="InterPro" id="IPR014030">
    <property type="entry name" value="Ketoacyl_synth_N"/>
</dbReference>
<dbReference type="InterPro" id="IPR016036">
    <property type="entry name" value="Malonyl_transacylase_ACP-bd"/>
</dbReference>
<dbReference type="InterPro" id="IPR020841">
    <property type="entry name" value="PKS_Beta-ketoAc_synthase_dom"/>
</dbReference>
<dbReference type="InterPro" id="IPR042104">
    <property type="entry name" value="PKS_dehydratase_sf"/>
</dbReference>
<dbReference type="InterPro" id="IPR049900">
    <property type="entry name" value="PKS_mFAS_DH"/>
</dbReference>
<dbReference type="InterPro" id="IPR050091">
    <property type="entry name" value="PKS_NRPS_Biosynth_Enz"/>
</dbReference>
<dbReference type="InterPro" id="IPR020806">
    <property type="entry name" value="PKS_PP-bd"/>
</dbReference>
<dbReference type="InterPro" id="IPR009081">
    <property type="entry name" value="PP-bd_ACP"/>
</dbReference>
<dbReference type="InterPro" id="IPR006162">
    <property type="entry name" value="Ppantetheine_attach_site"/>
</dbReference>
<dbReference type="InterPro" id="IPR030918">
    <property type="entry name" value="PT_fungal_PKS"/>
</dbReference>
<dbReference type="InterPro" id="IPR032088">
    <property type="entry name" value="SAT"/>
</dbReference>
<dbReference type="InterPro" id="IPR001031">
    <property type="entry name" value="Thioesterase"/>
</dbReference>
<dbReference type="InterPro" id="IPR016039">
    <property type="entry name" value="Thiolase-like"/>
</dbReference>
<dbReference type="NCBIfam" id="TIGR04532">
    <property type="entry name" value="PT_fungal_PKS"/>
    <property type="match status" value="1"/>
</dbReference>
<dbReference type="PANTHER" id="PTHR43775">
    <property type="entry name" value="FATTY ACID SYNTHASE"/>
    <property type="match status" value="1"/>
</dbReference>
<dbReference type="PANTHER" id="PTHR43775:SF37">
    <property type="entry name" value="SI:DKEY-61P9.11"/>
    <property type="match status" value="1"/>
</dbReference>
<dbReference type="Pfam" id="PF00698">
    <property type="entry name" value="Acyl_transf_1"/>
    <property type="match status" value="1"/>
</dbReference>
<dbReference type="Pfam" id="PF00109">
    <property type="entry name" value="ketoacyl-synt"/>
    <property type="match status" value="1"/>
</dbReference>
<dbReference type="Pfam" id="PF02801">
    <property type="entry name" value="Ketoacyl-synt_C"/>
    <property type="match status" value="1"/>
</dbReference>
<dbReference type="Pfam" id="PF00550">
    <property type="entry name" value="PP-binding"/>
    <property type="match status" value="2"/>
</dbReference>
<dbReference type="Pfam" id="PF16073">
    <property type="entry name" value="SAT"/>
    <property type="match status" value="1"/>
</dbReference>
<dbReference type="Pfam" id="PF00975">
    <property type="entry name" value="Thioesterase"/>
    <property type="match status" value="1"/>
</dbReference>
<dbReference type="SMART" id="SM00827">
    <property type="entry name" value="PKS_AT"/>
    <property type="match status" value="1"/>
</dbReference>
<dbReference type="SMART" id="SM00825">
    <property type="entry name" value="PKS_KS"/>
    <property type="match status" value="1"/>
</dbReference>
<dbReference type="SMART" id="SM00823">
    <property type="entry name" value="PKS_PP"/>
    <property type="match status" value="2"/>
</dbReference>
<dbReference type="SUPFAM" id="SSF47336">
    <property type="entry name" value="ACP-like"/>
    <property type="match status" value="2"/>
</dbReference>
<dbReference type="SUPFAM" id="SSF53474">
    <property type="entry name" value="alpha/beta-Hydrolases"/>
    <property type="match status" value="1"/>
</dbReference>
<dbReference type="SUPFAM" id="SSF52151">
    <property type="entry name" value="FabD/lysophospholipase-like"/>
    <property type="match status" value="1"/>
</dbReference>
<dbReference type="SUPFAM" id="SSF55048">
    <property type="entry name" value="Probable ACP-binding domain of malonyl-CoA ACP transacylase"/>
    <property type="match status" value="1"/>
</dbReference>
<dbReference type="SUPFAM" id="SSF53901">
    <property type="entry name" value="Thiolase-like"/>
    <property type="match status" value="1"/>
</dbReference>
<dbReference type="PROSITE" id="PS50075">
    <property type="entry name" value="CARRIER"/>
    <property type="match status" value="2"/>
</dbReference>
<dbReference type="PROSITE" id="PS00606">
    <property type="entry name" value="KS3_1"/>
    <property type="match status" value="1"/>
</dbReference>
<dbReference type="PROSITE" id="PS52004">
    <property type="entry name" value="KS3_2"/>
    <property type="match status" value="1"/>
</dbReference>
<dbReference type="PROSITE" id="PS00012">
    <property type="entry name" value="PHOSPHOPANTETHEINE"/>
    <property type="match status" value="1"/>
</dbReference>
<dbReference type="PROSITE" id="PS52019">
    <property type="entry name" value="PKS_MFAS_DH"/>
    <property type="match status" value="1"/>
</dbReference>
<comment type="function">
    <text evidence="10 12">Non-reducing polyketide synthase involved in the biosynthesis of bifonsecin B, a dimeric gamma-naphthopyrone (PubMed:31067027). The first step in the biosynthesis of bifonsecin B is the production of gamma-naphthopyrone precursor YWA1 by the non-reducing polyketide synthase albA, via condensation of one acetyl-CoA starter unit with 6 malonyl-CoA units (PubMed:31067027). YWA1 is then methylated by bfoE at position C-6 to yield foncesin which is further methylated at position C-8 by bfoD to produce fonsecin B (Probable). A key enzyme in the biosynthetic pathway is the cytochrome P450 monooxygenase bfoB which catalyzes the oxidative dimerization of fonsecin B to bifonsecin B (PubMed:31067027). Bfob also catalyzes the oxidative dimerization of rubrofusarin B into nigerone (PubMed:31067027). The stereoselectivity of bfoB is influenced by the two natural monomeric substrates; homodimerization of fonsecin B yields a stereochemically pure biaryl, M-foncerine B, while rubrofusarin B yields a mixture of enantiomers M- and P-nigerone (PubMed:31067027).</text>
</comment>
<comment type="catalytic activity">
    <reaction evidence="12">
        <text>6 malonyl-CoA + acetyl-CoA + 6 H(+) = naphtopyrone YWA1 + 6 CO2 + 7 CoA + H2O</text>
        <dbReference type="Rhea" id="RHEA:62652"/>
        <dbReference type="ChEBI" id="CHEBI:15377"/>
        <dbReference type="ChEBI" id="CHEBI:15378"/>
        <dbReference type="ChEBI" id="CHEBI:16526"/>
        <dbReference type="ChEBI" id="CHEBI:57287"/>
        <dbReference type="ChEBI" id="CHEBI:57288"/>
        <dbReference type="ChEBI" id="CHEBI:57384"/>
        <dbReference type="ChEBI" id="CHEBI:133763"/>
    </reaction>
    <physiologicalReaction direction="left-to-right" evidence="12">
        <dbReference type="Rhea" id="RHEA:62653"/>
    </physiologicalReaction>
</comment>
<comment type="pathway">
    <text evidence="12">Secondary metabolite biosynthesis.</text>
</comment>
<comment type="domain">
    <text evidence="3">Multidomain protein; including a starter unit:ACP transacylase (SAT) that selects the starter unit; a ketosynthase (KS) that catalyzes repeated decarboxylative condensation to elongate the polyketide backbone; a malonyl-CoA:ACP transacylase (MAT) that selects and transfers the extender unit malonyl-CoA; a product template (PT) domain that controls the immediate cyclization regioselectivity of the reactive polyketide backbone; and 2 acyl-carrier protein (ACP) domains that serve as the tethers of the growing and completed polyketide via their phosphopantetheinyl arm.</text>
</comment>
<comment type="domain">
    <text evidence="2">The C-terminal region is involved in Claisen-type cyclization of the second ring of naphthopyrone.</text>
</comment>
<evidence type="ECO:0000250" key="1">
    <source>
        <dbReference type="UniProtKB" id="A0A142C799"/>
    </source>
</evidence>
<evidence type="ECO:0000250" key="2">
    <source>
        <dbReference type="UniProtKB" id="Q03149"/>
    </source>
</evidence>
<evidence type="ECO:0000250" key="3">
    <source>
        <dbReference type="UniProtKB" id="Q5B0D0"/>
    </source>
</evidence>
<evidence type="ECO:0000255" key="4"/>
<evidence type="ECO:0000255" key="5">
    <source>
        <dbReference type="PROSITE-ProRule" id="PRU00258"/>
    </source>
</evidence>
<evidence type="ECO:0000255" key="6">
    <source>
        <dbReference type="PROSITE-ProRule" id="PRU01348"/>
    </source>
</evidence>
<evidence type="ECO:0000255" key="7">
    <source>
        <dbReference type="PROSITE-ProRule" id="PRU01363"/>
    </source>
</evidence>
<evidence type="ECO:0000255" key="8">
    <source>
        <dbReference type="PROSITE-ProRule" id="PRU10022"/>
    </source>
</evidence>
<evidence type="ECO:0000256" key="9">
    <source>
        <dbReference type="SAM" id="MobiDB-lite"/>
    </source>
</evidence>
<evidence type="ECO:0000269" key="10">
    <source>
    </source>
</evidence>
<evidence type="ECO:0000303" key="11">
    <source>
    </source>
</evidence>
<evidence type="ECO:0000305" key="12">
    <source>
    </source>
</evidence>
<feature type="chain" id="PRO_0000448920" description="Non-reducing polyketide synthase albA">
    <location>
        <begin position="1"/>
        <end position="2147"/>
    </location>
</feature>
<feature type="domain" description="Ketosynthase family 3 (KS3)" evidence="6">
    <location>
        <begin position="375"/>
        <end position="806"/>
    </location>
</feature>
<feature type="domain" description="PKS/mFAS DH" evidence="7">
    <location>
        <begin position="1286"/>
        <end position="1598"/>
    </location>
</feature>
<feature type="domain" description="Carrier 1" evidence="5">
    <location>
        <begin position="1642"/>
        <end position="1719"/>
    </location>
</feature>
<feature type="domain" description="Carrier 2" evidence="5">
    <location>
        <begin position="1760"/>
        <end position="1837"/>
    </location>
</feature>
<feature type="region of interest" description="N-terminal acylcarrier protein transacylase domain (SAT)" evidence="1 4">
    <location>
        <begin position="8"/>
        <end position="244"/>
    </location>
</feature>
<feature type="region of interest" description="Malonyl-CoA:ACP transacylase (MAT) domain" evidence="1 4">
    <location>
        <begin position="912"/>
        <end position="1232"/>
    </location>
</feature>
<feature type="region of interest" description="N-terminal hotdog fold" evidence="7">
    <location>
        <begin position="1286"/>
        <end position="1425"/>
    </location>
</feature>
<feature type="region of interest" description="Product template (PT) domain" evidence="1 4">
    <location>
        <begin position="1290"/>
        <end position="1603"/>
    </location>
</feature>
<feature type="region of interest" description="C-terminal hotdog fold" evidence="7">
    <location>
        <begin position="1452"/>
        <end position="1598"/>
    </location>
</feature>
<feature type="region of interest" description="Disordered" evidence="9">
    <location>
        <begin position="1608"/>
        <end position="1637"/>
    </location>
</feature>
<feature type="region of interest" description="Disordered" evidence="9">
    <location>
        <begin position="1719"/>
        <end position="1759"/>
    </location>
</feature>
<feature type="region of interest" description="Claisen cyclase domain" evidence="2">
    <location>
        <begin position="1873"/>
        <end position="2145"/>
    </location>
</feature>
<feature type="compositionally biased region" description="Low complexity" evidence="9">
    <location>
        <begin position="1610"/>
        <end position="1637"/>
    </location>
</feature>
<feature type="compositionally biased region" description="Low complexity" evidence="9">
    <location>
        <begin position="1724"/>
        <end position="1747"/>
    </location>
</feature>
<feature type="active site" description="For beta-ketoacyl synthase activity" evidence="6">
    <location>
        <position position="547"/>
    </location>
</feature>
<feature type="active site" description="For beta-ketoacyl synthase activity" evidence="6">
    <location>
        <position position="682"/>
    </location>
</feature>
<feature type="active site" description="For beta-ketoacyl synthase activity" evidence="6">
    <location>
        <position position="724"/>
    </location>
</feature>
<feature type="active site" description="For acyl/malonyl transferase activity" evidence="8">
    <location>
        <position position="1001"/>
    </location>
</feature>
<feature type="active site" description="Proton acceptor; for dehydratase activity" evidence="7">
    <location>
        <position position="1326"/>
    </location>
</feature>
<feature type="active site" description="Proton donor; for dehydratase activity" evidence="7">
    <location>
        <position position="1511"/>
    </location>
</feature>
<feature type="active site" description="For Claisen cyclase activity" evidence="2">
    <location>
        <position position="1963"/>
    </location>
</feature>
<feature type="modified residue" description="O-(pantetheine 4'-phosphoryl)serine" evidence="5">
    <location>
        <position position="1679"/>
    </location>
</feature>
<feature type="modified residue" description="O-(pantetheine 4'-phosphoryl)serine" evidence="5">
    <location>
        <position position="1797"/>
    </location>
</feature>
<protein>
    <recommendedName>
        <fullName evidence="11">Non-reducing polyketide synthase albA</fullName>
        <shortName evidence="11">NR-PKS albA</shortName>
        <ecNumber evidence="12">2.3.1.-</ecNumber>
    </recommendedName>
</protein>
<reference key="1">
    <citation type="journal article" date="2017" name="Genome Biol.">
        <title>Comparative genomics reveals high biological diversity and specific adaptations in the industrially and medically important fungal genus Aspergillus.</title>
        <authorList>
            <person name="de Vries R.P."/>
            <person name="Riley R."/>
            <person name="Wiebenga A."/>
            <person name="Aguilar-Osorio G."/>
            <person name="Amillis S."/>
            <person name="Uchima C.A."/>
            <person name="Anderluh G."/>
            <person name="Asadollahi M."/>
            <person name="Askin M."/>
            <person name="Barry K."/>
            <person name="Battaglia E."/>
            <person name="Bayram O."/>
            <person name="Benocci T."/>
            <person name="Braus-Stromeyer S.A."/>
            <person name="Caldana C."/>
            <person name="Canovas D."/>
            <person name="Cerqueira G.C."/>
            <person name="Chen F."/>
            <person name="Chen W."/>
            <person name="Choi C."/>
            <person name="Clum A."/>
            <person name="Dos Santos R.A."/>
            <person name="Damasio A.R."/>
            <person name="Diallinas G."/>
            <person name="Emri T."/>
            <person name="Fekete E."/>
            <person name="Flipphi M."/>
            <person name="Freyberg S."/>
            <person name="Gallo A."/>
            <person name="Gournas C."/>
            <person name="Habgood R."/>
            <person name="Hainaut M."/>
            <person name="Harispe M.L."/>
            <person name="Henrissat B."/>
            <person name="Hilden K.S."/>
            <person name="Hope R."/>
            <person name="Hossain A."/>
            <person name="Karabika E."/>
            <person name="Karaffa L."/>
            <person name="Karanyi Z."/>
            <person name="Krasevec N."/>
            <person name="Kuo A."/>
            <person name="Kusch H."/>
            <person name="LaButti K."/>
            <person name="Lagendijk E.L."/>
            <person name="Lapidus A."/>
            <person name="Levasseur A."/>
            <person name="Lindquist E."/>
            <person name="Lipzen A."/>
            <person name="Logrieco A.F."/>
            <person name="MacCabe A."/>
            <person name="Maekelae M.R."/>
            <person name="Malavazi I."/>
            <person name="Melin P."/>
            <person name="Meyer V."/>
            <person name="Mielnichuk N."/>
            <person name="Miskei M."/>
            <person name="Molnar A.P."/>
            <person name="Mule G."/>
            <person name="Ngan C.Y."/>
            <person name="Orejas M."/>
            <person name="Orosz E."/>
            <person name="Ouedraogo J.P."/>
            <person name="Overkamp K.M."/>
            <person name="Park H.-S."/>
            <person name="Perrone G."/>
            <person name="Piumi F."/>
            <person name="Punt P.J."/>
            <person name="Ram A.F."/>
            <person name="Ramon A."/>
            <person name="Rauscher S."/>
            <person name="Record E."/>
            <person name="Riano-Pachon D.M."/>
            <person name="Robert V."/>
            <person name="Roehrig J."/>
            <person name="Ruller R."/>
            <person name="Salamov A."/>
            <person name="Salih N.S."/>
            <person name="Samson R.A."/>
            <person name="Sandor E."/>
            <person name="Sanguinetti M."/>
            <person name="Schuetze T."/>
            <person name="Sepcic K."/>
            <person name="Shelest E."/>
            <person name="Sherlock G."/>
            <person name="Sophianopoulou V."/>
            <person name="Squina F.M."/>
            <person name="Sun H."/>
            <person name="Susca A."/>
            <person name="Todd R.B."/>
            <person name="Tsang A."/>
            <person name="Unkles S.E."/>
            <person name="van de Wiele N."/>
            <person name="van Rossen-Uffink D."/>
            <person name="Oliveira J.V."/>
            <person name="Vesth T.C."/>
            <person name="Visser J."/>
            <person name="Yu J.-H."/>
            <person name="Zhou M."/>
            <person name="Andersen M.R."/>
            <person name="Archer D.B."/>
            <person name="Baker S.E."/>
            <person name="Benoit I."/>
            <person name="Brakhage A.A."/>
            <person name="Braus G.H."/>
            <person name="Fischer R."/>
            <person name="Frisvad J.C."/>
            <person name="Goldman G.H."/>
            <person name="Houbraken J."/>
            <person name="Oakley B."/>
            <person name="Pocsi I."/>
            <person name="Scazzocchio C."/>
            <person name="Seiboth B."/>
            <person name="vanKuyk P.A."/>
            <person name="Wortman J."/>
            <person name="Dyer P.S."/>
            <person name="Grigoriev I.V."/>
        </authorList>
    </citation>
    <scope>NUCLEOTIDE SEQUENCE [LARGE SCALE GENOMIC DNA]</scope>
    <source>
        <strain>CBS 101740 / IMI 381727 / IBT 21946</strain>
    </source>
</reference>
<reference key="2">
    <citation type="journal article" date="2019" name="Biochemistry">
        <title>Biaryl-forming enzymes from Aspergilli exhibit substrate-dependent stereoselectivity.</title>
        <authorList>
            <person name="Obermaier S."/>
            <person name="Mueller M."/>
        </authorList>
    </citation>
    <scope>FUNCTION</scope>
    <scope>PATHWAY</scope>
</reference>
<organism>
    <name type="scientific">Aspergillus brasiliensis (strain CBS 101740 / IMI 381727 / IBT 21946)</name>
    <dbReference type="NCBI Taxonomy" id="767769"/>
    <lineage>
        <taxon>Eukaryota</taxon>
        <taxon>Fungi</taxon>
        <taxon>Dikarya</taxon>
        <taxon>Ascomycota</taxon>
        <taxon>Pezizomycotina</taxon>
        <taxon>Eurotiomycetes</taxon>
        <taxon>Eurotiomycetidae</taxon>
        <taxon>Eurotiales</taxon>
        <taxon>Aspergillaceae</taxon>
        <taxon>Aspergillus</taxon>
        <taxon>Aspergillus subgen. Circumdati</taxon>
    </lineage>
</organism>